<reference key="1">
    <citation type="journal article" date="2003" name="Bioinformatics">
        <title>Annotation pattern of ESTs from Spodoptera frugiperda Sf9 cells and analysis of the ribosomal protein genes reveal insect-specific features and unexpectedly low codon usage bias.</title>
        <authorList>
            <person name="Landais I."/>
            <person name="Ogliastro M."/>
            <person name="Mita K."/>
            <person name="Nohata J."/>
            <person name="Lopez-Ferber M."/>
            <person name="Duonor-Cerutti M."/>
            <person name="Shimada T."/>
            <person name="Fournier P."/>
            <person name="Devauchelle G."/>
        </authorList>
    </citation>
    <scope>NUCLEOTIDE SEQUENCE [LARGE SCALE MRNA]</scope>
</reference>
<evidence type="ECO:0000305" key="1"/>
<sequence length="124" mass="14300">MAKPKGERKGKSAINEVVTREYTVNLHKRLHGVGFKKRAPRAIKEIRKFAEKQMGTPDVRVDTRLNKFLWSKGVRNVPFRVRVRLSRRRNDDEDSAHKLFTLVTYVPVASIKGLQTENVDASQE</sequence>
<proteinExistence type="evidence at transcript level"/>
<feature type="chain" id="PRO_0000153774" description="Large ribosomal subunit protein eL31">
    <location>
        <begin position="1"/>
        <end position="124"/>
    </location>
</feature>
<gene>
    <name type="primary">RpL31</name>
</gene>
<keyword id="KW-0687">Ribonucleoprotein</keyword>
<keyword id="KW-0689">Ribosomal protein</keyword>
<protein>
    <recommendedName>
        <fullName evidence="1">Large ribosomal subunit protein eL31</fullName>
    </recommendedName>
    <alternativeName>
        <fullName>60S ribosomal protein L31</fullName>
    </alternativeName>
</protein>
<comment type="similarity">
    <text evidence="1">Belongs to the eukaryotic ribosomal protein eL31 family.</text>
</comment>
<dbReference type="EMBL" id="AF400194">
    <property type="protein sequence ID" value="AAK92166.1"/>
    <property type="molecule type" value="mRNA"/>
</dbReference>
<dbReference type="SMR" id="Q7KF90"/>
<dbReference type="EnsemblMetazoa" id="XM_050705308.1">
    <property type="protein sequence ID" value="XP_050561265.1"/>
    <property type="gene ID" value="LOC126912588"/>
</dbReference>
<dbReference type="OrthoDB" id="9739313at2759"/>
<dbReference type="Proteomes" id="UP000829999">
    <property type="component" value="Unplaced"/>
</dbReference>
<dbReference type="GO" id="GO:0022625">
    <property type="term" value="C:cytosolic large ribosomal subunit"/>
    <property type="evidence" value="ECO:0007669"/>
    <property type="project" value="TreeGrafter"/>
</dbReference>
<dbReference type="GO" id="GO:0003735">
    <property type="term" value="F:structural constituent of ribosome"/>
    <property type="evidence" value="ECO:0007669"/>
    <property type="project" value="InterPro"/>
</dbReference>
<dbReference type="GO" id="GO:0002181">
    <property type="term" value="P:cytoplasmic translation"/>
    <property type="evidence" value="ECO:0007669"/>
    <property type="project" value="TreeGrafter"/>
</dbReference>
<dbReference type="CDD" id="cd00463">
    <property type="entry name" value="Ribosomal_L31e"/>
    <property type="match status" value="1"/>
</dbReference>
<dbReference type="FunFam" id="3.10.440.10:FF:000001">
    <property type="entry name" value="60S ribosomal protein L31"/>
    <property type="match status" value="1"/>
</dbReference>
<dbReference type="Gene3D" id="3.10.440.10">
    <property type="match status" value="1"/>
</dbReference>
<dbReference type="InterPro" id="IPR000054">
    <property type="entry name" value="Ribosomal_eL31"/>
</dbReference>
<dbReference type="InterPro" id="IPR020052">
    <property type="entry name" value="Ribosomal_eL31_CS"/>
</dbReference>
<dbReference type="InterPro" id="IPR023621">
    <property type="entry name" value="Ribosomal_eL31_dom_sf"/>
</dbReference>
<dbReference type="PANTHER" id="PTHR10956">
    <property type="entry name" value="60S RIBOSOMAL PROTEIN L31"/>
    <property type="match status" value="1"/>
</dbReference>
<dbReference type="PANTHER" id="PTHR10956:SF0">
    <property type="entry name" value="60S RIBOSOMAL PROTEIN L31"/>
    <property type="match status" value="1"/>
</dbReference>
<dbReference type="Pfam" id="PF01198">
    <property type="entry name" value="Ribosomal_L31e"/>
    <property type="match status" value="1"/>
</dbReference>
<dbReference type="SMART" id="SM01380">
    <property type="entry name" value="Ribosomal_L31e"/>
    <property type="match status" value="1"/>
</dbReference>
<dbReference type="SUPFAM" id="SSF54575">
    <property type="entry name" value="Ribosomal protein L31e"/>
    <property type="match status" value="1"/>
</dbReference>
<dbReference type="PROSITE" id="PS01144">
    <property type="entry name" value="RIBOSOMAL_L31E"/>
    <property type="match status" value="1"/>
</dbReference>
<accession>Q7KF90</accession>
<name>RL31_SPOFR</name>
<organism>
    <name type="scientific">Spodoptera frugiperda</name>
    <name type="common">Fall armyworm</name>
    <dbReference type="NCBI Taxonomy" id="7108"/>
    <lineage>
        <taxon>Eukaryota</taxon>
        <taxon>Metazoa</taxon>
        <taxon>Ecdysozoa</taxon>
        <taxon>Arthropoda</taxon>
        <taxon>Hexapoda</taxon>
        <taxon>Insecta</taxon>
        <taxon>Pterygota</taxon>
        <taxon>Neoptera</taxon>
        <taxon>Endopterygota</taxon>
        <taxon>Lepidoptera</taxon>
        <taxon>Glossata</taxon>
        <taxon>Ditrysia</taxon>
        <taxon>Noctuoidea</taxon>
        <taxon>Noctuidae</taxon>
        <taxon>Amphipyrinae</taxon>
        <taxon>Spodoptera</taxon>
    </lineage>
</organism>